<organism>
    <name type="scientific">Salmonella paratyphi A (strain ATCC 9150 / SARB42)</name>
    <dbReference type="NCBI Taxonomy" id="295319"/>
    <lineage>
        <taxon>Bacteria</taxon>
        <taxon>Pseudomonadati</taxon>
        <taxon>Pseudomonadota</taxon>
        <taxon>Gammaproteobacteria</taxon>
        <taxon>Enterobacterales</taxon>
        <taxon>Enterobacteriaceae</taxon>
        <taxon>Salmonella</taxon>
    </lineage>
</organism>
<reference key="1">
    <citation type="journal article" date="2004" name="Nat. Genet.">
        <title>Comparison of genome degradation in Paratyphi A and Typhi, human-restricted serovars of Salmonella enterica that cause typhoid.</title>
        <authorList>
            <person name="McClelland M."/>
            <person name="Sanderson K.E."/>
            <person name="Clifton S.W."/>
            <person name="Latreille P."/>
            <person name="Porwollik S."/>
            <person name="Sabo A."/>
            <person name="Meyer R."/>
            <person name="Bieri T."/>
            <person name="Ozersky P."/>
            <person name="McLellan M."/>
            <person name="Harkins C.R."/>
            <person name="Wang C."/>
            <person name="Nguyen C."/>
            <person name="Berghoff A."/>
            <person name="Elliott G."/>
            <person name="Kohlberg S."/>
            <person name="Strong C."/>
            <person name="Du F."/>
            <person name="Carter J."/>
            <person name="Kremizki C."/>
            <person name="Layman D."/>
            <person name="Leonard S."/>
            <person name="Sun H."/>
            <person name="Fulton L."/>
            <person name="Nash W."/>
            <person name="Miner T."/>
            <person name="Minx P."/>
            <person name="Delehaunty K."/>
            <person name="Fronick C."/>
            <person name="Magrini V."/>
            <person name="Nhan M."/>
            <person name="Warren W."/>
            <person name="Florea L."/>
            <person name="Spieth J."/>
            <person name="Wilson R.K."/>
        </authorList>
    </citation>
    <scope>NUCLEOTIDE SEQUENCE [LARGE SCALE GENOMIC DNA]</scope>
    <source>
        <strain>ATCC 9150 / SARB42</strain>
    </source>
</reference>
<proteinExistence type="inferred from homology"/>
<name>RS12_SALPA</name>
<keyword id="KW-0488">Methylation</keyword>
<keyword id="KW-0687">Ribonucleoprotein</keyword>
<keyword id="KW-0689">Ribosomal protein</keyword>
<keyword id="KW-0694">RNA-binding</keyword>
<keyword id="KW-0699">rRNA-binding</keyword>
<keyword id="KW-0820">tRNA-binding</keyword>
<accession>Q5PIW1</accession>
<comment type="function">
    <text evidence="2">With S4 and S5 plays an important role in translational accuracy.</text>
</comment>
<comment type="function">
    <text evidence="2">Interacts with and stabilizes bases of the 16S rRNA that are involved in tRNA selection in the A site and with the mRNA backbone. Located at the interface of the 30S and 50S subunits, it traverses the body of the 30S subunit contacting proteins on the other side and probably holding the rRNA structure together. The combined cluster of proteins S8, S12 and S17 appears to hold together the shoulder and platform of the 30S subunit.</text>
</comment>
<comment type="subunit">
    <text evidence="2">Part of the 30S ribosomal subunit. Contacts proteins S8 and S17. May interact with IF1 in the 30S initiation complex.</text>
</comment>
<comment type="similarity">
    <text evidence="2">Belongs to the universal ribosomal protein uS12 family.</text>
</comment>
<gene>
    <name evidence="2" type="primary">rpsL</name>
    <name type="ordered locus">SPA3314</name>
</gene>
<dbReference type="EMBL" id="CP000026">
    <property type="protein sequence ID" value="AAV79130.1"/>
    <property type="molecule type" value="Genomic_DNA"/>
</dbReference>
<dbReference type="RefSeq" id="WP_000246815.1">
    <property type="nucleotide sequence ID" value="NC_006511.1"/>
</dbReference>
<dbReference type="SMR" id="Q5PIW1"/>
<dbReference type="GeneID" id="98390450"/>
<dbReference type="KEGG" id="spt:SPA3314"/>
<dbReference type="HOGENOM" id="CLU_104295_1_2_6"/>
<dbReference type="Proteomes" id="UP000008185">
    <property type="component" value="Chromosome"/>
</dbReference>
<dbReference type="GO" id="GO:0015935">
    <property type="term" value="C:small ribosomal subunit"/>
    <property type="evidence" value="ECO:0007669"/>
    <property type="project" value="InterPro"/>
</dbReference>
<dbReference type="GO" id="GO:0019843">
    <property type="term" value="F:rRNA binding"/>
    <property type="evidence" value="ECO:0007669"/>
    <property type="project" value="UniProtKB-UniRule"/>
</dbReference>
<dbReference type="GO" id="GO:0003735">
    <property type="term" value="F:structural constituent of ribosome"/>
    <property type="evidence" value="ECO:0007669"/>
    <property type="project" value="InterPro"/>
</dbReference>
<dbReference type="GO" id="GO:0000049">
    <property type="term" value="F:tRNA binding"/>
    <property type="evidence" value="ECO:0007669"/>
    <property type="project" value="UniProtKB-UniRule"/>
</dbReference>
<dbReference type="GO" id="GO:0006412">
    <property type="term" value="P:translation"/>
    <property type="evidence" value="ECO:0007669"/>
    <property type="project" value="UniProtKB-UniRule"/>
</dbReference>
<dbReference type="CDD" id="cd03368">
    <property type="entry name" value="Ribosomal_S12"/>
    <property type="match status" value="1"/>
</dbReference>
<dbReference type="FunFam" id="2.40.50.140:FF:000001">
    <property type="entry name" value="30S ribosomal protein S12"/>
    <property type="match status" value="1"/>
</dbReference>
<dbReference type="Gene3D" id="2.40.50.140">
    <property type="entry name" value="Nucleic acid-binding proteins"/>
    <property type="match status" value="1"/>
</dbReference>
<dbReference type="HAMAP" id="MF_00403_B">
    <property type="entry name" value="Ribosomal_uS12_B"/>
    <property type="match status" value="1"/>
</dbReference>
<dbReference type="InterPro" id="IPR012340">
    <property type="entry name" value="NA-bd_OB-fold"/>
</dbReference>
<dbReference type="InterPro" id="IPR006032">
    <property type="entry name" value="Ribosomal_uS12"/>
</dbReference>
<dbReference type="InterPro" id="IPR005679">
    <property type="entry name" value="Ribosomal_uS12_bac"/>
</dbReference>
<dbReference type="NCBIfam" id="TIGR00981">
    <property type="entry name" value="rpsL_bact"/>
    <property type="match status" value="1"/>
</dbReference>
<dbReference type="PANTHER" id="PTHR11652">
    <property type="entry name" value="30S RIBOSOMAL PROTEIN S12 FAMILY MEMBER"/>
    <property type="match status" value="1"/>
</dbReference>
<dbReference type="Pfam" id="PF00164">
    <property type="entry name" value="Ribosom_S12_S23"/>
    <property type="match status" value="1"/>
</dbReference>
<dbReference type="PIRSF" id="PIRSF002133">
    <property type="entry name" value="Ribosomal_S12/S23"/>
    <property type="match status" value="1"/>
</dbReference>
<dbReference type="PRINTS" id="PR01034">
    <property type="entry name" value="RIBOSOMALS12"/>
</dbReference>
<dbReference type="SUPFAM" id="SSF50249">
    <property type="entry name" value="Nucleic acid-binding proteins"/>
    <property type="match status" value="1"/>
</dbReference>
<dbReference type="PROSITE" id="PS00055">
    <property type="entry name" value="RIBOSOMAL_S12"/>
    <property type="match status" value="1"/>
</dbReference>
<protein>
    <recommendedName>
        <fullName evidence="2">Small ribosomal subunit protein uS12</fullName>
    </recommendedName>
    <alternativeName>
        <fullName evidence="3">30S ribosomal protein S12</fullName>
    </alternativeName>
</protein>
<sequence length="124" mass="13737">MATVNQLVRKPRARKVAKSNVPALEACPQKRGVCTRVYTTTPKKPNSALRKVCRVRLTNGFEVTSYIGGEGHNLQEHSVILIRGGRVKDLPGVRYHTVRGALDCSGVKDRKQARSKYGVKRPKA</sequence>
<feature type="initiator methionine" description="Removed" evidence="1">
    <location>
        <position position="1"/>
    </location>
</feature>
<feature type="chain" id="PRO_0000146301" description="Small ribosomal subunit protein uS12">
    <location>
        <begin position="2"/>
        <end position="124"/>
    </location>
</feature>
<feature type="modified residue" description="3-methylthioaspartic acid" evidence="1">
    <location>
        <position position="89"/>
    </location>
</feature>
<evidence type="ECO:0000250" key="1"/>
<evidence type="ECO:0000255" key="2">
    <source>
        <dbReference type="HAMAP-Rule" id="MF_00403"/>
    </source>
</evidence>
<evidence type="ECO:0000305" key="3"/>